<reference key="1">
    <citation type="journal article" date="2005" name="Nature">
        <title>The genome of the social amoeba Dictyostelium discoideum.</title>
        <authorList>
            <person name="Eichinger L."/>
            <person name="Pachebat J.A."/>
            <person name="Gloeckner G."/>
            <person name="Rajandream M.A."/>
            <person name="Sucgang R."/>
            <person name="Berriman M."/>
            <person name="Song J."/>
            <person name="Olsen R."/>
            <person name="Szafranski K."/>
            <person name="Xu Q."/>
            <person name="Tunggal B."/>
            <person name="Kummerfeld S."/>
            <person name="Madera M."/>
            <person name="Konfortov B.A."/>
            <person name="Rivero F."/>
            <person name="Bankier A.T."/>
            <person name="Lehmann R."/>
            <person name="Hamlin N."/>
            <person name="Davies R."/>
            <person name="Gaudet P."/>
            <person name="Fey P."/>
            <person name="Pilcher K."/>
            <person name="Chen G."/>
            <person name="Saunders D."/>
            <person name="Sodergren E.J."/>
            <person name="Davis P."/>
            <person name="Kerhornou A."/>
            <person name="Nie X."/>
            <person name="Hall N."/>
            <person name="Anjard C."/>
            <person name="Hemphill L."/>
            <person name="Bason N."/>
            <person name="Farbrother P."/>
            <person name="Desany B."/>
            <person name="Just E."/>
            <person name="Morio T."/>
            <person name="Rost R."/>
            <person name="Churcher C.M."/>
            <person name="Cooper J."/>
            <person name="Haydock S."/>
            <person name="van Driessche N."/>
            <person name="Cronin A."/>
            <person name="Goodhead I."/>
            <person name="Muzny D.M."/>
            <person name="Mourier T."/>
            <person name="Pain A."/>
            <person name="Lu M."/>
            <person name="Harper D."/>
            <person name="Lindsay R."/>
            <person name="Hauser H."/>
            <person name="James K.D."/>
            <person name="Quiles M."/>
            <person name="Madan Babu M."/>
            <person name="Saito T."/>
            <person name="Buchrieser C."/>
            <person name="Wardroper A."/>
            <person name="Felder M."/>
            <person name="Thangavelu M."/>
            <person name="Johnson D."/>
            <person name="Knights A."/>
            <person name="Loulseged H."/>
            <person name="Mungall K.L."/>
            <person name="Oliver K."/>
            <person name="Price C."/>
            <person name="Quail M.A."/>
            <person name="Urushihara H."/>
            <person name="Hernandez J."/>
            <person name="Rabbinowitsch E."/>
            <person name="Steffen D."/>
            <person name="Sanders M."/>
            <person name="Ma J."/>
            <person name="Kohara Y."/>
            <person name="Sharp S."/>
            <person name="Simmonds M.N."/>
            <person name="Spiegler S."/>
            <person name="Tivey A."/>
            <person name="Sugano S."/>
            <person name="White B."/>
            <person name="Walker D."/>
            <person name="Woodward J.R."/>
            <person name="Winckler T."/>
            <person name="Tanaka Y."/>
            <person name="Shaulsky G."/>
            <person name="Schleicher M."/>
            <person name="Weinstock G.M."/>
            <person name="Rosenthal A."/>
            <person name="Cox E.C."/>
            <person name="Chisholm R.L."/>
            <person name="Gibbs R.A."/>
            <person name="Loomis W.F."/>
            <person name="Platzer M."/>
            <person name="Kay R.R."/>
            <person name="Williams J.G."/>
            <person name="Dear P.H."/>
            <person name="Noegel A.A."/>
            <person name="Barrell B.G."/>
            <person name="Kuspa A."/>
        </authorList>
    </citation>
    <scope>NUCLEOTIDE SEQUENCE [LARGE SCALE GENOMIC DNA]</scope>
    <source>
        <strain>AX4</strain>
    </source>
</reference>
<reference key="2">
    <citation type="journal article" date="2007" name="Bioinformatics">
        <title>Polyketide synthase genes and the natural products potential of Dictyostelium discoideum.</title>
        <authorList>
            <person name="Zucko J."/>
            <person name="Skunca N."/>
            <person name="Curk T."/>
            <person name="Zupan B."/>
            <person name="Long P.F."/>
            <person name="Cullum J."/>
            <person name="Kessin R.H."/>
            <person name="Hranueli D."/>
        </authorList>
    </citation>
    <scope>IDENTIFICATION</scope>
</reference>
<proteinExistence type="inferred from homology"/>
<keyword id="KW-0472">Membrane</keyword>
<keyword id="KW-0596">Phosphopantetheine</keyword>
<keyword id="KW-0597">Phosphoprotein</keyword>
<keyword id="KW-1185">Reference proteome</keyword>
<keyword id="KW-0808">Transferase</keyword>
<keyword id="KW-0812">Transmembrane</keyword>
<keyword id="KW-1133">Transmembrane helix</keyword>
<evidence type="ECO:0000250" key="1"/>
<evidence type="ECO:0000255" key="2"/>
<evidence type="ECO:0000255" key="3">
    <source>
        <dbReference type="PROSITE-ProRule" id="PRU00258"/>
    </source>
</evidence>
<evidence type="ECO:0000255" key="4">
    <source>
        <dbReference type="PROSITE-ProRule" id="PRU01348"/>
    </source>
</evidence>
<evidence type="ECO:0000255" key="5">
    <source>
        <dbReference type="PROSITE-ProRule" id="PRU01363"/>
    </source>
</evidence>
<evidence type="ECO:0000305" key="6"/>
<dbReference type="EC" id="2.3.1.-"/>
<dbReference type="EMBL" id="AAFI02000224">
    <property type="protein sequence ID" value="EAL60455.1"/>
    <property type="status" value="ALT_SEQ"/>
    <property type="molecule type" value="Genomic_DNA"/>
</dbReference>
<dbReference type="RefSeq" id="XP_628867.1">
    <property type="nucleotide sequence ID" value="XM_628865.1"/>
</dbReference>
<dbReference type="SMR" id="Q54B49"/>
<dbReference type="FunCoup" id="Q54B49">
    <property type="interactions" value="1"/>
</dbReference>
<dbReference type="STRING" id="44689.Q54B49"/>
<dbReference type="GlyGen" id="Q54B49">
    <property type="glycosylation" value="1 site"/>
</dbReference>
<dbReference type="PaxDb" id="44689-DDB0230078"/>
<dbReference type="EnsemblProtists" id="EAL60455">
    <property type="protein sequence ID" value="EAL60455"/>
    <property type="gene ID" value="DDB_G0293912"/>
</dbReference>
<dbReference type="GeneID" id="8629483"/>
<dbReference type="KEGG" id="ddi:DDB_G0293912"/>
<dbReference type="dictyBase" id="DDB_G0293912">
    <property type="gene designation" value="pks45"/>
</dbReference>
<dbReference type="VEuPathDB" id="AmoebaDB:DDB_G0293912"/>
<dbReference type="eggNOG" id="KOG1178">
    <property type="taxonomic scope" value="Eukaryota"/>
</dbReference>
<dbReference type="eggNOG" id="KOG1202">
    <property type="taxonomic scope" value="Eukaryota"/>
</dbReference>
<dbReference type="InParanoid" id="Q54B49"/>
<dbReference type="PRO" id="PR:Q54B49"/>
<dbReference type="Proteomes" id="UP000002195">
    <property type="component" value="Chromosome 6"/>
</dbReference>
<dbReference type="GO" id="GO:0016020">
    <property type="term" value="C:membrane"/>
    <property type="evidence" value="ECO:0007669"/>
    <property type="project" value="UniProtKB-SubCell"/>
</dbReference>
<dbReference type="GO" id="GO:0016746">
    <property type="term" value="F:acyltransferase activity"/>
    <property type="evidence" value="ECO:0007669"/>
    <property type="project" value="InterPro"/>
</dbReference>
<dbReference type="GO" id="GO:0016491">
    <property type="term" value="F:oxidoreductase activity"/>
    <property type="evidence" value="ECO:0007669"/>
    <property type="project" value="InterPro"/>
</dbReference>
<dbReference type="GO" id="GO:0006633">
    <property type="term" value="P:fatty acid biosynthetic process"/>
    <property type="evidence" value="ECO:0000318"/>
    <property type="project" value="GO_Central"/>
</dbReference>
<dbReference type="CDD" id="cd05195">
    <property type="entry name" value="enoyl_red"/>
    <property type="match status" value="1"/>
</dbReference>
<dbReference type="CDD" id="cd00833">
    <property type="entry name" value="PKS"/>
    <property type="match status" value="1"/>
</dbReference>
<dbReference type="CDD" id="cd05235">
    <property type="entry name" value="SDR_e1"/>
    <property type="match status" value="1"/>
</dbReference>
<dbReference type="Gene3D" id="3.30.70.3290">
    <property type="match status" value="1"/>
</dbReference>
<dbReference type="Gene3D" id="3.40.47.10">
    <property type="match status" value="1"/>
</dbReference>
<dbReference type="Gene3D" id="1.10.1200.10">
    <property type="entry name" value="ACP-like"/>
    <property type="match status" value="1"/>
</dbReference>
<dbReference type="Gene3D" id="3.40.366.10">
    <property type="entry name" value="Malonyl-Coenzyme A Acyl Carrier Protein, domain 2"/>
    <property type="match status" value="1"/>
</dbReference>
<dbReference type="Gene3D" id="3.90.180.10">
    <property type="entry name" value="Medium-chain alcohol dehydrogenases, catalytic domain"/>
    <property type="match status" value="1"/>
</dbReference>
<dbReference type="Gene3D" id="3.40.50.720">
    <property type="entry name" value="NAD(P)-binding Rossmann-like Domain"/>
    <property type="match status" value="3"/>
</dbReference>
<dbReference type="Gene3D" id="3.10.129.110">
    <property type="entry name" value="Polyketide synthase dehydratase"/>
    <property type="match status" value="1"/>
</dbReference>
<dbReference type="Gene3D" id="3.40.50.150">
    <property type="entry name" value="Vaccinia Virus protein VP39"/>
    <property type="match status" value="1"/>
</dbReference>
<dbReference type="InterPro" id="IPR001227">
    <property type="entry name" value="Ac_transferase_dom_sf"/>
</dbReference>
<dbReference type="InterPro" id="IPR036736">
    <property type="entry name" value="ACP-like_sf"/>
</dbReference>
<dbReference type="InterPro" id="IPR014043">
    <property type="entry name" value="Acyl_transferase_dom"/>
</dbReference>
<dbReference type="InterPro" id="IPR016035">
    <property type="entry name" value="Acyl_Trfase/lysoPLipase"/>
</dbReference>
<dbReference type="InterPro" id="IPR013154">
    <property type="entry name" value="ADH-like_N"/>
</dbReference>
<dbReference type="InterPro" id="IPR013120">
    <property type="entry name" value="Far_NAD-bd"/>
</dbReference>
<dbReference type="InterPro" id="IPR011032">
    <property type="entry name" value="GroES-like_sf"/>
</dbReference>
<dbReference type="InterPro" id="IPR014031">
    <property type="entry name" value="Ketoacyl_synth_C"/>
</dbReference>
<dbReference type="InterPro" id="IPR014030">
    <property type="entry name" value="Ketoacyl_synth_N"/>
</dbReference>
<dbReference type="InterPro" id="IPR016036">
    <property type="entry name" value="Malonyl_transacylase_ACP-bd"/>
</dbReference>
<dbReference type="InterPro" id="IPR036291">
    <property type="entry name" value="NAD(P)-bd_dom_sf"/>
</dbReference>
<dbReference type="InterPro" id="IPR032821">
    <property type="entry name" value="PKS_assoc"/>
</dbReference>
<dbReference type="InterPro" id="IPR020841">
    <property type="entry name" value="PKS_Beta-ketoAc_synthase_dom"/>
</dbReference>
<dbReference type="InterPro" id="IPR042104">
    <property type="entry name" value="PKS_dehydratase_sf"/>
</dbReference>
<dbReference type="InterPro" id="IPR020843">
    <property type="entry name" value="PKS_ER"/>
</dbReference>
<dbReference type="InterPro" id="IPR013968">
    <property type="entry name" value="PKS_KR"/>
</dbReference>
<dbReference type="InterPro" id="IPR049900">
    <property type="entry name" value="PKS_mFAS_DH"/>
</dbReference>
<dbReference type="InterPro" id="IPR050444">
    <property type="entry name" value="Polyketide_Synthase"/>
</dbReference>
<dbReference type="InterPro" id="IPR009081">
    <property type="entry name" value="PP-bd_ACP"/>
</dbReference>
<dbReference type="InterPro" id="IPR029063">
    <property type="entry name" value="SAM-dependent_MTases_sf"/>
</dbReference>
<dbReference type="InterPro" id="IPR010080">
    <property type="entry name" value="Thioester_reductase-like_dom"/>
</dbReference>
<dbReference type="InterPro" id="IPR016039">
    <property type="entry name" value="Thiolase-like"/>
</dbReference>
<dbReference type="PANTHER" id="PTHR45681:SF1">
    <property type="entry name" value="POLYKETIDE SYNTHASE 2-RELATED"/>
    <property type="match status" value="1"/>
</dbReference>
<dbReference type="PANTHER" id="PTHR45681">
    <property type="entry name" value="POLYKETIDE SYNTHASE 44-RELATED"/>
    <property type="match status" value="1"/>
</dbReference>
<dbReference type="Pfam" id="PF23297">
    <property type="entry name" value="ACP_SdgA_C"/>
    <property type="match status" value="1"/>
</dbReference>
<dbReference type="Pfam" id="PF00698">
    <property type="entry name" value="Acyl_transf_1"/>
    <property type="match status" value="1"/>
</dbReference>
<dbReference type="Pfam" id="PF08240">
    <property type="entry name" value="ADH_N"/>
    <property type="match status" value="1"/>
</dbReference>
<dbReference type="Pfam" id="PF13602">
    <property type="entry name" value="ADH_zinc_N_2"/>
    <property type="match status" value="1"/>
</dbReference>
<dbReference type="Pfam" id="PF16197">
    <property type="entry name" value="KAsynt_C_assoc"/>
    <property type="match status" value="1"/>
</dbReference>
<dbReference type="Pfam" id="PF00109">
    <property type="entry name" value="ketoacyl-synt"/>
    <property type="match status" value="1"/>
</dbReference>
<dbReference type="Pfam" id="PF02801">
    <property type="entry name" value="Ketoacyl-synt_C"/>
    <property type="match status" value="1"/>
</dbReference>
<dbReference type="Pfam" id="PF08659">
    <property type="entry name" value="KR"/>
    <property type="match status" value="1"/>
</dbReference>
<dbReference type="Pfam" id="PF07993">
    <property type="entry name" value="NAD_binding_4"/>
    <property type="match status" value="1"/>
</dbReference>
<dbReference type="SMART" id="SM00827">
    <property type="entry name" value="PKS_AT"/>
    <property type="match status" value="1"/>
</dbReference>
<dbReference type="SMART" id="SM00829">
    <property type="entry name" value="PKS_ER"/>
    <property type="match status" value="1"/>
</dbReference>
<dbReference type="SMART" id="SM00822">
    <property type="entry name" value="PKS_KR"/>
    <property type="match status" value="1"/>
</dbReference>
<dbReference type="SMART" id="SM00825">
    <property type="entry name" value="PKS_KS"/>
    <property type="match status" value="1"/>
</dbReference>
<dbReference type="SUPFAM" id="SSF47336">
    <property type="entry name" value="ACP-like"/>
    <property type="match status" value="1"/>
</dbReference>
<dbReference type="SUPFAM" id="SSF52151">
    <property type="entry name" value="FabD/lysophospholipase-like"/>
    <property type="match status" value="1"/>
</dbReference>
<dbReference type="SUPFAM" id="SSF50129">
    <property type="entry name" value="GroES-like"/>
    <property type="match status" value="1"/>
</dbReference>
<dbReference type="SUPFAM" id="SSF51735">
    <property type="entry name" value="NAD(P)-binding Rossmann-fold domains"/>
    <property type="match status" value="3"/>
</dbReference>
<dbReference type="SUPFAM" id="SSF55048">
    <property type="entry name" value="Probable ACP-binding domain of malonyl-CoA ACP transacylase"/>
    <property type="match status" value="1"/>
</dbReference>
<dbReference type="SUPFAM" id="SSF53335">
    <property type="entry name" value="S-adenosyl-L-methionine-dependent methyltransferases"/>
    <property type="match status" value="1"/>
</dbReference>
<dbReference type="SUPFAM" id="SSF53901">
    <property type="entry name" value="Thiolase-like"/>
    <property type="match status" value="1"/>
</dbReference>
<dbReference type="PROSITE" id="PS50075">
    <property type="entry name" value="CARRIER"/>
    <property type="match status" value="1"/>
</dbReference>
<dbReference type="PROSITE" id="PS52004">
    <property type="entry name" value="KS3_2"/>
    <property type="match status" value="1"/>
</dbReference>
<dbReference type="PROSITE" id="PS52019">
    <property type="entry name" value="PKS_MFAS_DH"/>
    <property type="match status" value="1"/>
</dbReference>
<protein>
    <recommendedName>
        <fullName>Probable polyketide synthase 45</fullName>
        <shortName>dipks45</shortName>
        <ecNumber>2.3.1.-</ecNumber>
    </recommendedName>
</protein>
<comment type="function">
    <text evidence="1">Probable polyketide synthase.</text>
</comment>
<comment type="cofactor">
    <cofactor evidence="1">
        <name>pantetheine 4'-phosphate</name>
        <dbReference type="ChEBI" id="CHEBI:47942"/>
    </cofactor>
    <text evidence="1">Binds 1 phosphopantetheine covalently.</text>
</comment>
<comment type="subcellular location">
    <subcellularLocation>
        <location evidence="6">Membrane</location>
        <topology evidence="6">Single-pass membrane protein</topology>
    </subcellularLocation>
</comment>
<comment type="domain">
    <text evidence="1">Modular protein that is responsible for the completion of one condensation-processing cycle. The beta-ketoacyl synthase region is responsible for the actual condensation reaction while the acyl/malonyl transferase region is responsible for incorporating carboxylic acids units onto an acyl carrier protein (ACP) domain (By similarity).</text>
</comment>
<comment type="miscellaneous">
    <text>Encoded by one of the numerous copies of polyketide synthase genes and clustered as a pair pks44/pks45 in chromosome 6.</text>
</comment>
<comment type="sequence caution" evidence="6">
    <conflict type="erroneous gene model prediction">
        <sequence resource="EMBL-CDS" id="EAL60455"/>
    </conflict>
</comment>
<sequence>MDSQNIKYGDNDVAIIGIGLRLPSSINRPSELWEGFLAGFDGIVETTNRWSDSFASMDEISSKYADEWMSFDPLFFGIIPTEVPSIDPQQRLLLKCTWEAFEDANIDPFKLRGTNTSVYVGASSLDYASINVDFDETPMNIFNSNMSGVSNRISYCFDFRGASLTIDTACSSSLNAVHLGYKSIISGESDYSIVGGCNFIMSPHTSRSFESANVTSKTGKSKAFDQDANGFVRSEGVVSIILKKMSKAIQDGDQIYSVIKGTNSNVDGNLNKGNFFAPSKQSQANNIKSAMESCNKETTNSTPIALNDIDFFELHGTSTQIGDPIECEGVSSVFKESREKPLLIGSIKANIGHLEPASGVASLAKVALMFKHRQFVKNINFDKPNPNIKFDEWKIKVCTENTPFPNNKKVSIAINSFGITGSNVCLILTEYIKPTTTKTTNGTAILSTFPLLSTTTTATTNNNGNQKYLIPISANSKPSLESYKEKLINSSKEFSETINFKDFVKYQLDSKTLKLTQRSVIIASNWEEAGSTQSIITTNSNRSGNIIKDTNKNPQLVFVFSGQGPQWSKMFTQLYDQEPIFKQKTDQIDSLLSKHYGYSILNKLNSIKDDDTVTINEPILAQPSVFMIQMALIELYKHWGILASISIGHSLGEVSSAVCSGMIDLETGCFIIYHRSRLQQQTSGSGKMLVASLNEQKFNQEFDNFQQKYPSIEIACFNSPSSIVLAGKESELQEISNILKEQETFSIFLGAQSSFHSSSQEPIKDELLKQLKDIKSTKSNIPNFSTVTSNLFNDDDEVAQQPDEASAHNTNTITLFDSKYVYENVRKPVQFEKTIKNVFNYIEKKGLGSSVIFLEISASPVLGNYIREMIPQDSNYFFIEDQTISVLSSLNKKNKDQVLEIQTSISQLYCKGYNVNFNCSNQTNSLDFQNTEYKQLSDVLFKYSWDDESYWSVAPLISNYIKNGPAINQLGNRNERQPYQSYVSIIDIKKEPFEFFKGHSSRNRVIYPGCGYIDSILKAFPDQDLTIQSMEFKSAVLLLPSMKTYLSTNITPSGKNEYRVSFHYKDKKTNKWSLSCSGKFSITKHNDEVVRKFDIEKLKAKTNFVTIQKKELYETIKYKAQFTFEGKFQSIEEVSYGHNCCLAKVPLTTLSSYDNQSFLNLCVIDSAFQPFCAVKENKEPMLFSSIENLKFFSKNIPKSAEDREKHKFVYTYTQIKEKKCGSYFVSILTMLQDGTILFFSPLVVYTQLTPYKNQYIIESPNDNLYKICYQSKDSTLPSPLILKDKFDQLNFETTDEQSQIIRKALSNCLFAIFKRNNNLFTKEEIKSQSIDYLIEKYCLIIDNDDDNDGIDDNSILVNGGVASIDDMVLASTAGKETTILNNGKRVLAKLIFQILKSNVDLIDWDNIATFTNTSSKQQLNIIQAIDNLIVTPLSVTNQVTESDLISKTQLDIINNRMKIKQYELISNTIATDLIKPIINNSILFRILEINSGFGYLSEMIINKINQLLIEFENSYEIEIEFTFTLNGTNQDDNKEISNSIKEKLTNLLISKSSISIIFKELNLNESFLEQKFNPSYYDLIVLTNLSTITNLNESIEFINSILYPNGHLIIIDTKNQSNFQDYEIFEQFLIFDNFGGGIVDDNIDWNQIFQNNNLNNAIVTPNIQPHVIQVQKSKLYDKVMSTLDDITGPYDQIIIIGDQMQDTNEDLFQNPIMDINKQGTDIYRIKTIEEFEKHCLTIPPTDKSILFFISAMNNLSLGDYKQVNFDYIKINQYLLANKLRCPFILATRSALKESTNALAASLIGSFRYFSEFSNILNLYSFDFGEMVFTIASGSPFKWMNMAIDLLDPNKHIQREYIFRNGNETWFERIGKIKRVKSKYQSKSYLDDKEDSLVARLNQNLEYQLEAKQSNLKENEIEVQVVATGINFKDSLIFRNLVPPVLANHDGDYSKPEFGIECSGIVSRIGSKVTKFKVGDSVLGISWKSTSSHAINYQDAFVLKPDNISFVEAASIPLVYCTSFYSLFYSGNLKIENNESVLIHQASGGIGLACLNILKSCGFKSKLYVTVGSKEKEDYLRETYGDFITGIYSSRNTDFLENIKTDLSKINNNNNEIKENNTINESFDDVDQILPFIHKKGVDLIINTLPFEFLDTNFLLLGQGGRIVDLSVNHLNNNDTTDFSKFKWFIGYSTVEIFYNGFEKSKHILQLIIDMIKNKELPLIPIKEYPINQIKDAIEFIGQRKHIGKIVINHKVGLRDGCSNLVQDTIKSLQNHLKDNYLVASPDFKFMGDSLGKTILLTGQTGLSLSIIQISLLNNYQDLEGIIVISKSPIRNELQYLISFAKYLSRKTRVHFKQADCSKFDEISKAISEIYEKDDPNLSPVESIFHNAFVPVMSEPQDIGMKHIDDAYDAKTTGAMNLYLLAILNGWKLKNFFFSSSVASVSGSSRQAGYCGANLVLESIAKTIQSQGIRCSTICWGSIGDIGYVSRNESVSKYVHGLGNISMPSNMVLGSLDLLLQQPTLSTDTTIVASFDFNNLPKLSTNGSNNLYYKFDYFTNPIQSNQNNCSSDDLSIREEILAKFSEFLSVDDQSKINLDIKLLDYGADSMVIVELKNYLDKTYTPNILSIQQLQNVTINQLIQSVTDAMNKLNGNENKSIKKSNKLVQQKQIDWVKEIKLDSSIKPTDEMIKLFKQLQQQLASPTTTTSNTVFLTGSSGFIGIYILFYLIKSVNCKIVYCLIRRKTIEEATTFLIEFLKVHQLYNQLTTDEINKIKPVLGDYTLDSFGLSVDQYTNLSNNVDLIINSAASVSFLMDYEDSKVESVEGVLQCLRFSCHNKLKKFVQVSTLGVYSDDKRDNLDDYTFAQIDPKIIQSKNSIINGYLQGKIVSEYHIKEAANRGIPCCIIRLPFIGPNPSTGVGNDSDFFQTLLQSCYAMSTYPKQESGLQLYSTPVTWVAQNLSFISMNPKCWSTSSNNPSSISENLTCYNLFGESICFNVLLTELASQLKWKPTPPGEFLKKLKSFPNEPSCNKLHVVLKNSKNLLLNIYIPGNYKLNPTLKQLLQSNNTYKGWKITPEMILTHLSFTFKKIKFINYK</sequence>
<organism>
    <name type="scientific">Dictyostelium discoideum</name>
    <name type="common">Social amoeba</name>
    <dbReference type="NCBI Taxonomy" id="44689"/>
    <lineage>
        <taxon>Eukaryota</taxon>
        <taxon>Amoebozoa</taxon>
        <taxon>Evosea</taxon>
        <taxon>Eumycetozoa</taxon>
        <taxon>Dictyostelia</taxon>
        <taxon>Dictyosteliales</taxon>
        <taxon>Dictyosteliaceae</taxon>
        <taxon>Dictyostelium</taxon>
    </lineage>
</organism>
<gene>
    <name type="primary">pks45</name>
    <name type="ORF">DDB_G0293912</name>
</gene>
<accession>Q54B49</accession>
<name>PKS45_DICDI</name>
<feature type="chain" id="PRO_0000371401" description="Probable polyketide synthase 45">
    <location>
        <begin position="1"/>
        <end position="3092"/>
    </location>
</feature>
<feature type="transmembrane region" description="Helical" evidence="2">
    <location>
        <begin position="2705"/>
        <end position="2725"/>
    </location>
</feature>
<feature type="domain" description="Ketosynthase family 3 (KS3)" evidence="4">
    <location>
        <begin position="10"/>
        <end position="430"/>
    </location>
</feature>
<feature type="domain" description="PKS/mFAS DH" evidence="5">
    <location>
        <begin position="967"/>
        <end position="1254"/>
    </location>
</feature>
<feature type="domain" description="Carrier" evidence="3">
    <location>
        <begin position="2566"/>
        <end position="2644"/>
    </location>
</feature>
<feature type="region of interest" description="Acyl/malonyl transferase">
    <location>
        <begin position="640"/>
        <end position="673"/>
    </location>
</feature>
<feature type="region of interest" description="N-terminal hotdog fold" evidence="5">
    <location>
        <begin position="967"/>
        <end position="1087"/>
    </location>
</feature>
<feature type="region of interest" description="C-terminal hotdog fold" evidence="5">
    <location>
        <begin position="1103"/>
        <end position="1254"/>
    </location>
</feature>
<feature type="active site" description="For beta-ketoacyl synthase activity" evidence="4">
    <location>
        <position position="170"/>
    </location>
</feature>
<feature type="active site" description="For beta-ketoacyl synthase activity" evidence="4">
    <location>
        <position position="315"/>
    </location>
</feature>
<feature type="active site" description="For beta-ketoacyl synthase activity" evidence="4">
    <location>
        <position position="353"/>
    </location>
</feature>
<feature type="active site" description="For acyl/malonyl transferase activity" evidence="1">
    <location>
        <position position="650"/>
    </location>
</feature>
<feature type="active site" description="Proton acceptor; for dehydratase activity" evidence="5">
    <location>
        <position position="999"/>
    </location>
</feature>
<feature type="active site" description="Proton donor; for dehydratase activity" evidence="5">
    <location>
        <position position="1165"/>
    </location>
</feature>
<feature type="modified residue" description="O-(pantetheine 4'-phosphoryl)serine" evidence="3">
    <location>
        <position position="2604"/>
    </location>
</feature>